<reference key="1">
    <citation type="journal article" date="2003" name="Nature">
        <title>Unique physiological and pathogenic features of Leptospira interrogans revealed by whole-genome sequencing.</title>
        <authorList>
            <person name="Ren S.-X."/>
            <person name="Fu G."/>
            <person name="Jiang X.-G."/>
            <person name="Zeng R."/>
            <person name="Miao Y.-G."/>
            <person name="Xu H."/>
            <person name="Zhang Y.-X."/>
            <person name="Xiong H."/>
            <person name="Lu G."/>
            <person name="Lu L.-F."/>
            <person name="Jiang H.-Q."/>
            <person name="Jia J."/>
            <person name="Tu Y.-F."/>
            <person name="Jiang J.-X."/>
            <person name="Gu W.-Y."/>
            <person name="Zhang Y.-Q."/>
            <person name="Cai Z."/>
            <person name="Sheng H.-H."/>
            <person name="Yin H.-F."/>
            <person name="Zhang Y."/>
            <person name="Zhu G.-F."/>
            <person name="Wan M."/>
            <person name="Huang H.-L."/>
            <person name="Qian Z."/>
            <person name="Wang S.-Y."/>
            <person name="Ma W."/>
            <person name="Yao Z.-J."/>
            <person name="Shen Y."/>
            <person name="Qiang B.-Q."/>
            <person name="Xia Q.-C."/>
            <person name="Guo X.-K."/>
            <person name="Danchin A."/>
            <person name="Saint Girons I."/>
            <person name="Somerville R.L."/>
            <person name="Wen Y.-M."/>
            <person name="Shi M.-H."/>
            <person name="Chen Z."/>
            <person name="Xu J.-G."/>
            <person name="Zhao G.-P."/>
        </authorList>
    </citation>
    <scope>NUCLEOTIDE SEQUENCE [LARGE SCALE GENOMIC DNA]</scope>
    <source>
        <strain>56601</strain>
    </source>
</reference>
<gene>
    <name evidence="1" type="primary">ileS</name>
    <name type="ordered locus">LA_1325</name>
</gene>
<protein>
    <recommendedName>
        <fullName evidence="1">Isoleucine--tRNA ligase</fullName>
        <ecNumber evidence="1">6.1.1.5</ecNumber>
    </recommendedName>
    <alternativeName>
        <fullName evidence="1">Isoleucyl-tRNA synthetase</fullName>
        <shortName evidence="1">IleRS</shortName>
    </alternativeName>
</protein>
<comment type="function">
    <text evidence="1">Catalyzes the attachment of isoleucine to tRNA(Ile). As IleRS can inadvertently accommodate and process structurally similar amino acids such as valine, to avoid such errors it has two additional distinct tRNA(Ile)-dependent editing activities. One activity is designated as 'pretransfer' editing and involves the hydrolysis of activated Val-AMP. The other activity is designated 'posttransfer' editing and involves deacylation of mischarged Val-tRNA(Ile).</text>
</comment>
<comment type="catalytic activity">
    <reaction evidence="1">
        <text>tRNA(Ile) + L-isoleucine + ATP = L-isoleucyl-tRNA(Ile) + AMP + diphosphate</text>
        <dbReference type="Rhea" id="RHEA:11060"/>
        <dbReference type="Rhea" id="RHEA-COMP:9666"/>
        <dbReference type="Rhea" id="RHEA-COMP:9695"/>
        <dbReference type="ChEBI" id="CHEBI:30616"/>
        <dbReference type="ChEBI" id="CHEBI:33019"/>
        <dbReference type="ChEBI" id="CHEBI:58045"/>
        <dbReference type="ChEBI" id="CHEBI:78442"/>
        <dbReference type="ChEBI" id="CHEBI:78528"/>
        <dbReference type="ChEBI" id="CHEBI:456215"/>
        <dbReference type="EC" id="6.1.1.5"/>
    </reaction>
</comment>
<comment type="cofactor">
    <cofactor evidence="1">
        <name>Zn(2+)</name>
        <dbReference type="ChEBI" id="CHEBI:29105"/>
    </cofactor>
    <text evidence="1">Binds 1 zinc ion per subunit.</text>
</comment>
<comment type="subunit">
    <text evidence="1">Monomer.</text>
</comment>
<comment type="subcellular location">
    <subcellularLocation>
        <location evidence="1">Cytoplasm</location>
    </subcellularLocation>
</comment>
<comment type="domain">
    <text evidence="1">IleRS has two distinct active sites: one for aminoacylation and one for editing. The misactivated valine is translocated from the active site to the editing site, which sterically excludes the correctly activated isoleucine. The single editing site contains two valyl binding pockets, one specific for each substrate (Val-AMP or Val-tRNA(Ile)).</text>
</comment>
<comment type="similarity">
    <text evidence="1">Belongs to the class-I aminoacyl-tRNA synthetase family. IleS type 1 subfamily.</text>
</comment>
<name>SYI_LEPIN</name>
<evidence type="ECO:0000255" key="1">
    <source>
        <dbReference type="HAMAP-Rule" id="MF_02002"/>
    </source>
</evidence>
<feature type="chain" id="PRO_0000098408" description="Isoleucine--tRNA ligase">
    <location>
        <begin position="1"/>
        <end position="914"/>
    </location>
</feature>
<feature type="short sequence motif" description="'HIGH' region">
    <location>
        <begin position="64"/>
        <end position="74"/>
    </location>
</feature>
<feature type="short sequence motif" description="'KMSKS' region">
    <location>
        <begin position="598"/>
        <end position="602"/>
    </location>
</feature>
<feature type="binding site" evidence="1">
    <location>
        <position position="557"/>
    </location>
    <ligand>
        <name>L-isoleucyl-5'-AMP</name>
        <dbReference type="ChEBI" id="CHEBI:178002"/>
    </ligand>
</feature>
<feature type="binding site" evidence="1">
    <location>
        <position position="601"/>
    </location>
    <ligand>
        <name>ATP</name>
        <dbReference type="ChEBI" id="CHEBI:30616"/>
    </ligand>
</feature>
<feature type="binding site" evidence="1">
    <location>
        <position position="889"/>
    </location>
    <ligand>
        <name>Zn(2+)</name>
        <dbReference type="ChEBI" id="CHEBI:29105"/>
    </ligand>
</feature>
<feature type="binding site" evidence="1">
    <location>
        <position position="892"/>
    </location>
    <ligand>
        <name>Zn(2+)</name>
        <dbReference type="ChEBI" id="CHEBI:29105"/>
    </ligand>
</feature>
<feature type="binding site" evidence="1">
    <location>
        <position position="906"/>
    </location>
    <ligand>
        <name>Zn(2+)</name>
        <dbReference type="ChEBI" id="CHEBI:29105"/>
    </ligand>
</feature>
<feature type="binding site" evidence="1">
    <location>
        <position position="909"/>
    </location>
    <ligand>
        <name>Zn(2+)</name>
        <dbReference type="ChEBI" id="CHEBI:29105"/>
    </ligand>
</feature>
<proteinExistence type="inferred from homology"/>
<sequence length="914" mass="104352">MSETQKENPYSSTVLLPKTDFPMKADLAKREPAQIQSWKSGQIFRKMKEQRKGKKEFVLHDGPPYANGNFHLGHSLNKIVKDIIIKSKSLAGFYADMIPGWDCHGLPIEVQVLKNLGKKARETGPEELRRLCRNYAEEFVGKQGEDLSRFLCFWEEDRIYKTMSPGFEAKIVEVFGELFQNGYVYRGKKPVYWSIDLATAHAEAEIEYYPHVSPSIYVKFPIVGEQKKFCLIWTTTPWTLPANLGICFNRKIEYSFFKTESGEELILADGLAESVTSTTGVSLNKVKSISSDELSVLKFQHPFMDRISISLFGDHVTLDAGTGCVHTAPGHGQDDYKVGLAAGLEPFSPVDDYGKYTDEFPLMQGKKVFDANPEIIQLLKDKGLLLHHSEFEHSYPHSWRSKKPLIFRATPQWFFKMDFNELREKSLSAIDGVQWIPSWGITRIRSMVETRPDWCLSRQRNWGVPIPAFTCESCGQTHIDDVSIQFFTKMVREKGIEIWYSEKAADLLPPGTKCGKCGSDSFKKGNDILDVWFDSGVSSFAVLGERKDEPPADLYFEGSDQHRGWFQSSLWPSMALRGIPPYKTVLTHGYVLDEKGHPMSKSLGNGIDPTADVIQIYGADILRLWVSSLDFRDDIKVGKESLKIVSEQYRKIRNTFRYLLGNLDGHTSEQNLPFEELEELDLFYLSKLSQFAEDVIANYEAYQFHQIYQKLILFCTVTLSQDYFDMIRDRMYCDARNSKTRKSSATALQYILETLCILTAPILSFTAEEVWVSNGKKDSVFLQNFPDLKFWKNQNLEEKFESVLQVREVVQKALEIARQENKLGKSLEAGLEIVSKNGTNLTKILPKETLEILFVVSQVHEKNPGLDVLSFYENEKFSVKVLKPVQVECPRCWRHTEDISKEGDLCGRCKSVVG</sequence>
<keyword id="KW-0030">Aminoacyl-tRNA synthetase</keyword>
<keyword id="KW-0067">ATP-binding</keyword>
<keyword id="KW-0963">Cytoplasm</keyword>
<keyword id="KW-0436">Ligase</keyword>
<keyword id="KW-0479">Metal-binding</keyword>
<keyword id="KW-0547">Nucleotide-binding</keyword>
<keyword id="KW-0648">Protein biosynthesis</keyword>
<keyword id="KW-1185">Reference proteome</keyword>
<keyword id="KW-0862">Zinc</keyword>
<accession>Q8F6I1</accession>
<dbReference type="EC" id="6.1.1.5" evidence="1"/>
<dbReference type="EMBL" id="AE010300">
    <property type="protein sequence ID" value="AAN48524.1"/>
    <property type="molecule type" value="Genomic_DNA"/>
</dbReference>
<dbReference type="RefSeq" id="NP_711506.1">
    <property type="nucleotide sequence ID" value="NC_004342.2"/>
</dbReference>
<dbReference type="RefSeq" id="WP_000005314.1">
    <property type="nucleotide sequence ID" value="NC_004342.2"/>
</dbReference>
<dbReference type="SMR" id="Q8F6I1"/>
<dbReference type="FunCoup" id="Q8F6I1">
    <property type="interactions" value="476"/>
</dbReference>
<dbReference type="STRING" id="189518.LA_1325"/>
<dbReference type="PaxDb" id="189518-LA_1325"/>
<dbReference type="EnsemblBacteria" id="AAN48524">
    <property type="protein sequence ID" value="AAN48524"/>
    <property type="gene ID" value="LA_1325"/>
</dbReference>
<dbReference type="KEGG" id="lil:LA_1325"/>
<dbReference type="PATRIC" id="fig|189518.3.peg.1323"/>
<dbReference type="HOGENOM" id="CLU_001493_7_1_12"/>
<dbReference type="InParanoid" id="Q8F6I1"/>
<dbReference type="OrthoDB" id="9810365at2"/>
<dbReference type="Proteomes" id="UP000001408">
    <property type="component" value="Chromosome I"/>
</dbReference>
<dbReference type="GO" id="GO:0005829">
    <property type="term" value="C:cytosol"/>
    <property type="evidence" value="ECO:0000318"/>
    <property type="project" value="GO_Central"/>
</dbReference>
<dbReference type="GO" id="GO:0002161">
    <property type="term" value="F:aminoacyl-tRNA deacylase activity"/>
    <property type="evidence" value="ECO:0007669"/>
    <property type="project" value="InterPro"/>
</dbReference>
<dbReference type="GO" id="GO:0005524">
    <property type="term" value="F:ATP binding"/>
    <property type="evidence" value="ECO:0007669"/>
    <property type="project" value="UniProtKB-UniRule"/>
</dbReference>
<dbReference type="GO" id="GO:0004822">
    <property type="term" value="F:isoleucine-tRNA ligase activity"/>
    <property type="evidence" value="ECO:0000318"/>
    <property type="project" value="GO_Central"/>
</dbReference>
<dbReference type="GO" id="GO:0000049">
    <property type="term" value="F:tRNA binding"/>
    <property type="evidence" value="ECO:0007669"/>
    <property type="project" value="InterPro"/>
</dbReference>
<dbReference type="GO" id="GO:0008270">
    <property type="term" value="F:zinc ion binding"/>
    <property type="evidence" value="ECO:0007669"/>
    <property type="project" value="UniProtKB-UniRule"/>
</dbReference>
<dbReference type="GO" id="GO:0006428">
    <property type="term" value="P:isoleucyl-tRNA aminoacylation"/>
    <property type="evidence" value="ECO:0000318"/>
    <property type="project" value="GO_Central"/>
</dbReference>
<dbReference type="CDD" id="cd07960">
    <property type="entry name" value="Anticodon_Ia_Ile_BEm"/>
    <property type="match status" value="1"/>
</dbReference>
<dbReference type="CDD" id="cd00818">
    <property type="entry name" value="IleRS_core"/>
    <property type="match status" value="1"/>
</dbReference>
<dbReference type="FunFam" id="1.10.730.20:FF:000006">
    <property type="entry name" value="Isoleucine--tRNA ligase"/>
    <property type="match status" value="1"/>
</dbReference>
<dbReference type="Gene3D" id="1.10.730.20">
    <property type="match status" value="1"/>
</dbReference>
<dbReference type="Gene3D" id="3.40.50.620">
    <property type="entry name" value="HUPs"/>
    <property type="match status" value="2"/>
</dbReference>
<dbReference type="Gene3D" id="1.10.10.830">
    <property type="entry name" value="Ile-tRNA synthetase CP2 domain-like"/>
    <property type="match status" value="1"/>
</dbReference>
<dbReference type="HAMAP" id="MF_02002">
    <property type="entry name" value="Ile_tRNA_synth_type1"/>
    <property type="match status" value="1"/>
</dbReference>
<dbReference type="InterPro" id="IPR001412">
    <property type="entry name" value="aa-tRNA-synth_I_CS"/>
</dbReference>
<dbReference type="InterPro" id="IPR002300">
    <property type="entry name" value="aa-tRNA-synth_Ia"/>
</dbReference>
<dbReference type="InterPro" id="IPR033708">
    <property type="entry name" value="Anticodon_Ile_BEm"/>
</dbReference>
<dbReference type="InterPro" id="IPR002301">
    <property type="entry name" value="Ile-tRNA-ligase"/>
</dbReference>
<dbReference type="InterPro" id="IPR023585">
    <property type="entry name" value="Ile-tRNA-ligase_type1"/>
</dbReference>
<dbReference type="InterPro" id="IPR050081">
    <property type="entry name" value="Ile-tRNA_ligase"/>
</dbReference>
<dbReference type="InterPro" id="IPR013155">
    <property type="entry name" value="M/V/L/I-tRNA-synth_anticd-bd"/>
</dbReference>
<dbReference type="InterPro" id="IPR014729">
    <property type="entry name" value="Rossmann-like_a/b/a_fold"/>
</dbReference>
<dbReference type="InterPro" id="IPR009080">
    <property type="entry name" value="tRNAsynth_Ia_anticodon-bd"/>
</dbReference>
<dbReference type="InterPro" id="IPR009008">
    <property type="entry name" value="Val/Leu/Ile-tRNA-synth_edit"/>
</dbReference>
<dbReference type="InterPro" id="IPR010663">
    <property type="entry name" value="Znf_FPG/IleRS"/>
</dbReference>
<dbReference type="NCBIfam" id="TIGR00392">
    <property type="entry name" value="ileS"/>
    <property type="match status" value="1"/>
</dbReference>
<dbReference type="PANTHER" id="PTHR42765:SF1">
    <property type="entry name" value="ISOLEUCINE--TRNA LIGASE, MITOCHONDRIAL"/>
    <property type="match status" value="1"/>
</dbReference>
<dbReference type="PANTHER" id="PTHR42765">
    <property type="entry name" value="SOLEUCYL-TRNA SYNTHETASE"/>
    <property type="match status" value="1"/>
</dbReference>
<dbReference type="Pfam" id="PF08264">
    <property type="entry name" value="Anticodon_1"/>
    <property type="match status" value="1"/>
</dbReference>
<dbReference type="Pfam" id="PF00133">
    <property type="entry name" value="tRNA-synt_1"/>
    <property type="match status" value="1"/>
</dbReference>
<dbReference type="Pfam" id="PF06827">
    <property type="entry name" value="zf-FPG_IleRS"/>
    <property type="match status" value="1"/>
</dbReference>
<dbReference type="PRINTS" id="PR00984">
    <property type="entry name" value="TRNASYNTHILE"/>
</dbReference>
<dbReference type="SUPFAM" id="SSF47323">
    <property type="entry name" value="Anticodon-binding domain of a subclass of class I aminoacyl-tRNA synthetases"/>
    <property type="match status" value="1"/>
</dbReference>
<dbReference type="SUPFAM" id="SSF52374">
    <property type="entry name" value="Nucleotidylyl transferase"/>
    <property type="match status" value="1"/>
</dbReference>
<dbReference type="SUPFAM" id="SSF50677">
    <property type="entry name" value="ValRS/IleRS/LeuRS editing domain"/>
    <property type="match status" value="1"/>
</dbReference>
<dbReference type="PROSITE" id="PS00178">
    <property type="entry name" value="AA_TRNA_LIGASE_I"/>
    <property type="match status" value="1"/>
</dbReference>
<organism>
    <name type="scientific">Leptospira interrogans serogroup Icterohaemorrhagiae serovar Lai (strain 56601)</name>
    <dbReference type="NCBI Taxonomy" id="189518"/>
    <lineage>
        <taxon>Bacteria</taxon>
        <taxon>Pseudomonadati</taxon>
        <taxon>Spirochaetota</taxon>
        <taxon>Spirochaetia</taxon>
        <taxon>Leptospirales</taxon>
        <taxon>Leptospiraceae</taxon>
        <taxon>Leptospira</taxon>
    </lineage>
</organism>